<name>ISPG_STRGG</name>
<keyword id="KW-0004">4Fe-4S</keyword>
<keyword id="KW-0408">Iron</keyword>
<keyword id="KW-0411">Iron-sulfur</keyword>
<keyword id="KW-0414">Isoprene biosynthesis</keyword>
<keyword id="KW-0479">Metal-binding</keyword>
<keyword id="KW-0560">Oxidoreductase</keyword>
<reference key="1">
    <citation type="journal article" date="2008" name="J. Bacteriol.">
        <title>Genome sequence of the streptomycin-producing microorganism Streptomyces griseus IFO 13350.</title>
        <authorList>
            <person name="Ohnishi Y."/>
            <person name="Ishikawa J."/>
            <person name="Hara H."/>
            <person name="Suzuki H."/>
            <person name="Ikenoya M."/>
            <person name="Ikeda H."/>
            <person name="Yamashita A."/>
            <person name="Hattori M."/>
            <person name="Horinouchi S."/>
        </authorList>
    </citation>
    <scope>NUCLEOTIDE SEQUENCE [LARGE SCALE GENOMIC DNA]</scope>
    <source>
        <strain>JCM 4626 / CBS 651.72 / NBRC 13350 / KCC S-0626 / ISP 5235</strain>
    </source>
</reference>
<protein>
    <recommendedName>
        <fullName evidence="1">4-hydroxy-3-methylbut-2-en-1-yl diphosphate synthase (flavodoxin)</fullName>
        <ecNumber evidence="1">1.17.7.3</ecNumber>
    </recommendedName>
    <alternativeName>
        <fullName evidence="1">1-hydroxy-2-methyl-2-(E)-butenyl 4-diphosphate synthase</fullName>
    </alternativeName>
</protein>
<proteinExistence type="inferred from homology"/>
<dbReference type="EC" id="1.17.7.3" evidence="1"/>
<dbReference type="EMBL" id="AP009493">
    <property type="protein sequence ID" value="BAG18650.1"/>
    <property type="molecule type" value="Genomic_DNA"/>
</dbReference>
<dbReference type="RefSeq" id="WP_003965892.1">
    <property type="nucleotide sequence ID" value="NC_010572.1"/>
</dbReference>
<dbReference type="SMR" id="B1VYP5"/>
<dbReference type="GeneID" id="91373147"/>
<dbReference type="KEGG" id="sgr:SGR_1821"/>
<dbReference type="eggNOG" id="COG0821">
    <property type="taxonomic scope" value="Bacteria"/>
</dbReference>
<dbReference type="HOGENOM" id="CLU_042258_0_0_11"/>
<dbReference type="UniPathway" id="UPA00056">
    <property type="reaction ID" value="UER00096"/>
</dbReference>
<dbReference type="Proteomes" id="UP000001685">
    <property type="component" value="Chromosome"/>
</dbReference>
<dbReference type="GO" id="GO:0051539">
    <property type="term" value="F:4 iron, 4 sulfur cluster binding"/>
    <property type="evidence" value="ECO:0007669"/>
    <property type="project" value="UniProtKB-UniRule"/>
</dbReference>
<dbReference type="GO" id="GO:0046429">
    <property type="term" value="F:4-hydroxy-3-methylbut-2-en-1-yl diphosphate synthase activity (ferredoxin)"/>
    <property type="evidence" value="ECO:0007669"/>
    <property type="project" value="UniProtKB-UniRule"/>
</dbReference>
<dbReference type="GO" id="GO:0141197">
    <property type="term" value="F:4-hydroxy-3-methylbut-2-enyl-diphosphate synthase activity (flavodoxin)"/>
    <property type="evidence" value="ECO:0007669"/>
    <property type="project" value="UniProtKB-EC"/>
</dbReference>
<dbReference type="GO" id="GO:0005506">
    <property type="term" value="F:iron ion binding"/>
    <property type="evidence" value="ECO:0007669"/>
    <property type="project" value="InterPro"/>
</dbReference>
<dbReference type="GO" id="GO:0019288">
    <property type="term" value="P:isopentenyl diphosphate biosynthetic process, methylerythritol 4-phosphate pathway"/>
    <property type="evidence" value="ECO:0007669"/>
    <property type="project" value="UniProtKB-UniRule"/>
</dbReference>
<dbReference type="GO" id="GO:0016114">
    <property type="term" value="P:terpenoid biosynthetic process"/>
    <property type="evidence" value="ECO:0007669"/>
    <property type="project" value="InterPro"/>
</dbReference>
<dbReference type="FunFam" id="3.20.20.20:FF:000003">
    <property type="entry name" value="4-hydroxy-3-methylbut-2-en-1-yl diphosphate synthase (flavodoxin)"/>
    <property type="match status" value="1"/>
</dbReference>
<dbReference type="FunFam" id="3.30.413.10:FF:000001">
    <property type="entry name" value="4-hydroxy-3-methylbut-2-en-1-yl diphosphate synthase (flavodoxin)"/>
    <property type="match status" value="1"/>
</dbReference>
<dbReference type="Gene3D" id="3.20.20.20">
    <property type="entry name" value="Dihydropteroate synthase-like"/>
    <property type="match status" value="1"/>
</dbReference>
<dbReference type="Gene3D" id="3.30.413.10">
    <property type="entry name" value="Sulfite Reductase Hemoprotein, domain 1"/>
    <property type="match status" value="1"/>
</dbReference>
<dbReference type="HAMAP" id="MF_00159">
    <property type="entry name" value="IspG"/>
    <property type="match status" value="1"/>
</dbReference>
<dbReference type="InterPro" id="IPR011005">
    <property type="entry name" value="Dihydropteroate_synth-like_sf"/>
</dbReference>
<dbReference type="InterPro" id="IPR016425">
    <property type="entry name" value="IspG_bac"/>
</dbReference>
<dbReference type="InterPro" id="IPR004588">
    <property type="entry name" value="IspG_bac-typ"/>
</dbReference>
<dbReference type="InterPro" id="IPR045854">
    <property type="entry name" value="NO2/SO3_Rdtase_4Fe4S_sf"/>
</dbReference>
<dbReference type="NCBIfam" id="TIGR00612">
    <property type="entry name" value="ispG_gcpE"/>
    <property type="match status" value="1"/>
</dbReference>
<dbReference type="NCBIfam" id="NF001540">
    <property type="entry name" value="PRK00366.1"/>
    <property type="match status" value="1"/>
</dbReference>
<dbReference type="PANTHER" id="PTHR30454">
    <property type="entry name" value="4-HYDROXY-3-METHYLBUT-2-EN-1-YL DIPHOSPHATE SYNTHASE"/>
    <property type="match status" value="1"/>
</dbReference>
<dbReference type="PANTHER" id="PTHR30454:SF0">
    <property type="entry name" value="4-HYDROXY-3-METHYLBUT-2-EN-1-YL DIPHOSPHATE SYNTHASE (FERREDOXIN), CHLOROPLASTIC"/>
    <property type="match status" value="1"/>
</dbReference>
<dbReference type="Pfam" id="PF04551">
    <property type="entry name" value="GcpE"/>
    <property type="match status" value="1"/>
</dbReference>
<dbReference type="PIRSF" id="PIRSF004640">
    <property type="entry name" value="IspG"/>
    <property type="match status" value="1"/>
</dbReference>
<dbReference type="SUPFAM" id="SSF51717">
    <property type="entry name" value="Dihydropteroate synthetase-like"/>
    <property type="match status" value="1"/>
</dbReference>
<dbReference type="SUPFAM" id="SSF56014">
    <property type="entry name" value="Nitrite and sulphite reductase 4Fe-4S domain-like"/>
    <property type="match status" value="1"/>
</dbReference>
<feature type="chain" id="PRO_1000097188" description="4-hydroxy-3-methylbut-2-en-1-yl diphosphate synthase (flavodoxin)">
    <location>
        <begin position="1"/>
        <end position="385"/>
    </location>
</feature>
<feature type="binding site" evidence="1">
    <location>
        <position position="280"/>
    </location>
    <ligand>
        <name>[4Fe-4S] cluster</name>
        <dbReference type="ChEBI" id="CHEBI:49883"/>
    </ligand>
</feature>
<feature type="binding site" evidence="1">
    <location>
        <position position="283"/>
    </location>
    <ligand>
        <name>[4Fe-4S] cluster</name>
        <dbReference type="ChEBI" id="CHEBI:49883"/>
    </ligand>
</feature>
<feature type="binding site" evidence="1">
    <location>
        <position position="315"/>
    </location>
    <ligand>
        <name>[4Fe-4S] cluster</name>
        <dbReference type="ChEBI" id="CHEBI:49883"/>
    </ligand>
</feature>
<feature type="binding site" evidence="1">
    <location>
        <position position="322"/>
    </location>
    <ligand>
        <name>[4Fe-4S] cluster</name>
        <dbReference type="ChEBI" id="CHEBI:49883"/>
    </ligand>
</feature>
<accession>B1VYP5</accession>
<evidence type="ECO:0000255" key="1">
    <source>
        <dbReference type="HAMAP-Rule" id="MF_00159"/>
    </source>
</evidence>
<sequence>MTAISLGMPAVPTKLADRRVSRQIQVGTVAVGGDAPVSVQSMTTTRTSDIGATLQQIAELTASGCQIVRVACPTQDDADALATIARKSQIPVIADIHFQPKYVFAAIDAGCAAVRVNPGNIKQFDDKVKEIAKAASETRTPIRIGVNAGSLDARLLKKYGKATPEALVESALWEASLFEEHGFGDIKISVKHNDPVVMVNAYRQLAAQSDYPLHLGVTEAGPAFQGTIKSAVAFGALLSEGIGDTIRVSLSAPPAEEVKVGLQILEALNLKQRRLEIVSCPSCGRAQVDVYKLADQVSAGLEGMEVPLRVAVMGCVVNGPGEAREADLGVASGNGKGQIFVKGEVIKTVPESKIVETLIEEALKIAEQMEKDGIASGEPQVSIGA</sequence>
<gene>
    <name evidence="1" type="primary">ispG</name>
    <name type="ordered locus">SGR_1821</name>
</gene>
<comment type="function">
    <text evidence="1">Converts 2C-methyl-D-erythritol 2,4-cyclodiphosphate (ME-2,4cPP) into 1-hydroxy-2-methyl-2-(E)-butenyl 4-diphosphate.</text>
</comment>
<comment type="catalytic activity">
    <reaction evidence="1">
        <text>(2E)-4-hydroxy-3-methylbut-2-enyl diphosphate + oxidized [flavodoxin] + H2O + 2 H(+) = 2-C-methyl-D-erythritol 2,4-cyclic diphosphate + reduced [flavodoxin]</text>
        <dbReference type="Rhea" id="RHEA:43604"/>
        <dbReference type="Rhea" id="RHEA-COMP:10622"/>
        <dbReference type="Rhea" id="RHEA-COMP:10623"/>
        <dbReference type="ChEBI" id="CHEBI:15377"/>
        <dbReference type="ChEBI" id="CHEBI:15378"/>
        <dbReference type="ChEBI" id="CHEBI:57618"/>
        <dbReference type="ChEBI" id="CHEBI:58210"/>
        <dbReference type="ChEBI" id="CHEBI:58483"/>
        <dbReference type="ChEBI" id="CHEBI:128753"/>
        <dbReference type="EC" id="1.17.7.3"/>
    </reaction>
</comment>
<comment type="cofactor">
    <cofactor evidence="1">
        <name>[4Fe-4S] cluster</name>
        <dbReference type="ChEBI" id="CHEBI:49883"/>
    </cofactor>
    <text evidence="1">Binds 1 [4Fe-4S] cluster.</text>
</comment>
<comment type="pathway">
    <text evidence="1">Isoprenoid biosynthesis; isopentenyl diphosphate biosynthesis via DXP pathway; isopentenyl diphosphate from 1-deoxy-D-xylulose 5-phosphate: step 5/6.</text>
</comment>
<comment type="similarity">
    <text evidence="1">Belongs to the IspG family.</text>
</comment>
<organism>
    <name type="scientific">Streptomyces griseus subsp. griseus (strain JCM 4626 / CBS 651.72 / NBRC 13350 / KCC S-0626 / ISP 5235)</name>
    <dbReference type="NCBI Taxonomy" id="455632"/>
    <lineage>
        <taxon>Bacteria</taxon>
        <taxon>Bacillati</taxon>
        <taxon>Actinomycetota</taxon>
        <taxon>Actinomycetes</taxon>
        <taxon>Kitasatosporales</taxon>
        <taxon>Streptomycetaceae</taxon>
        <taxon>Streptomyces</taxon>
    </lineage>
</organism>